<protein>
    <recommendedName>
        <fullName evidence="1">UPF0225 protein DR_0483</fullName>
    </recommendedName>
</protein>
<keyword id="KW-1185">Reference proteome</keyword>
<reference key="1">
    <citation type="journal article" date="1999" name="Science">
        <title>Genome sequence of the radioresistant bacterium Deinococcus radiodurans R1.</title>
        <authorList>
            <person name="White O."/>
            <person name="Eisen J.A."/>
            <person name="Heidelberg J.F."/>
            <person name="Hickey E.K."/>
            <person name="Peterson J.D."/>
            <person name="Dodson R.J."/>
            <person name="Haft D.H."/>
            <person name="Gwinn M.L."/>
            <person name="Nelson W.C."/>
            <person name="Richardson D.L."/>
            <person name="Moffat K.S."/>
            <person name="Qin H."/>
            <person name="Jiang L."/>
            <person name="Pamphile W."/>
            <person name="Crosby M."/>
            <person name="Shen M."/>
            <person name="Vamathevan J.J."/>
            <person name="Lam P."/>
            <person name="McDonald L.A."/>
            <person name="Utterback T.R."/>
            <person name="Zalewski C."/>
            <person name="Makarova K.S."/>
            <person name="Aravind L."/>
            <person name="Daly M.J."/>
            <person name="Minton K.W."/>
            <person name="Fleischmann R.D."/>
            <person name="Ketchum K.A."/>
            <person name="Nelson K.E."/>
            <person name="Salzberg S.L."/>
            <person name="Smith H.O."/>
            <person name="Venter J.C."/>
            <person name="Fraser C.M."/>
        </authorList>
    </citation>
    <scope>NUCLEOTIDE SEQUENCE [LARGE SCALE GENOMIC DNA]</scope>
    <source>
        <strain>ATCC 13939 / DSM 20539 / JCM 16871 / CCUG 27074 / LMG 4051 / NBRC 15346 / NCIMB 9279 / VKM B-1422 / R1</strain>
    </source>
</reference>
<dbReference type="EMBL" id="AE000513">
    <property type="protein sequence ID" value="AAF10062.1"/>
    <property type="status" value="ALT_INIT"/>
    <property type="molecule type" value="Genomic_DNA"/>
</dbReference>
<dbReference type="PIR" id="F75514">
    <property type="entry name" value="F75514"/>
</dbReference>
<dbReference type="RefSeq" id="NP_294206.1">
    <property type="nucleotide sequence ID" value="NC_001263.1"/>
</dbReference>
<dbReference type="RefSeq" id="WP_027479552.1">
    <property type="nucleotide sequence ID" value="NC_001263.1"/>
</dbReference>
<dbReference type="SMR" id="Q9RX32"/>
<dbReference type="STRING" id="243230.DR_0483"/>
<dbReference type="PaxDb" id="243230-DR_0483"/>
<dbReference type="EnsemblBacteria" id="AAF10062">
    <property type="protein sequence ID" value="AAF10062"/>
    <property type="gene ID" value="DR_0483"/>
</dbReference>
<dbReference type="GeneID" id="69516719"/>
<dbReference type="KEGG" id="dra:DR_0483"/>
<dbReference type="PATRIC" id="fig|243230.17.peg.662"/>
<dbReference type="eggNOG" id="COG3012">
    <property type="taxonomic scope" value="Bacteria"/>
</dbReference>
<dbReference type="HOGENOM" id="CLU_099590_2_0_0"/>
<dbReference type="InParanoid" id="Q9RX32"/>
<dbReference type="OrthoDB" id="21421at2"/>
<dbReference type="Proteomes" id="UP000002524">
    <property type="component" value="Chromosome 1"/>
</dbReference>
<dbReference type="Gene3D" id="3.10.450.50">
    <property type="match status" value="1"/>
</dbReference>
<dbReference type="HAMAP" id="MF_00612">
    <property type="entry name" value="UPF0225"/>
    <property type="match status" value="1"/>
</dbReference>
<dbReference type="InterPro" id="IPR032710">
    <property type="entry name" value="NTF2-like_dom_sf"/>
</dbReference>
<dbReference type="InterPro" id="IPR004027">
    <property type="entry name" value="SEC_C_motif"/>
</dbReference>
<dbReference type="InterPro" id="IPR023006">
    <property type="entry name" value="UPF0225"/>
</dbReference>
<dbReference type="InterPro" id="IPR048469">
    <property type="entry name" value="YchJ-like_M"/>
</dbReference>
<dbReference type="PANTHER" id="PTHR33747:SF1">
    <property type="entry name" value="ADENYLATE CYCLASE-ASSOCIATED CAP C-TERMINAL DOMAIN-CONTAINING PROTEIN"/>
    <property type="match status" value="1"/>
</dbReference>
<dbReference type="PANTHER" id="PTHR33747">
    <property type="entry name" value="UPF0225 PROTEIN SCO1677"/>
    <property type="match status" value="1"/>
</dbReference>
<dbReference type="Pfam" id="PF02810">
    <property type="entry name" value="SEC-C"/>
    <property type="match status" value="1"/>
</dbReference>
<dbReference type="Pfam" id="PF17775">
    <property type="entry name" value="YchJ_M-like"/>
    <property type="match status" value="1"/>
</dbReference>
<dbReference type="SUPFAM" id="SSF54427">
    <property type="entry name" value="NTF2-like"/>
    <property type="match status" value="1"/>
</dbReference>
<organism>
    <name type="scientific">Deinococcus radiodurans (strain ATCC 13939 / DSM 20539 / JCM 16871 / CCUG 27074 / LMG 4051 / NBRC 15346 / NCIMB 9279 / VKM B-1422 / R1)</name>
    <dbReference type="NCBI Taxonomy" id="243230"/>
    <lineage>
        <taxon>Bacteria</taxon>
        <taxon>Thermotogati</taxon>
        <taxon>Deinococcota</taxon>
        <taxon>Deinococci</taxon>
        <taxon>Deinococcales</taxon>
        <taxon>Deinococcaceae</taxon>
        <taxon>Deinococcus</taxon>
    </lineage>
</organism>
<accession>Q9RX32</accession>
<gene>
    <name type="ordered locus">DR_0483</name>
</gene>
<feature type="chain" id="PRO_0000071802" description="UPF0225 protein DR_0483">
    <location>
        <begin position="1"/>
        <end position="130"/>
    </location>
</feature>
<comment type="similarity">
    <text evidence="1">Belongs to the UPF0225 family.</text>
</comment>
<comment type="sequence caution" evidence="2">
    <conflict type="erroneous initiation">
        <sequence resource="EMBL-CDS" id="AAF10062"/>
    </conflict>
</comment>
<proteinExistence type="inferred from homology"/>
<evidence type="ECO:0000255" key="1">
    <source>
        <dbReference type="HAMAP-Rule" id="MF_00612"/>
    </source>
</evidence>
<evidence type="ECO:0000305" key="2"/>
<sequence length="130" mass="14675">MSRPTGPQFWPPFKPCPCGSGRSYAACCQPFHTGERDAPTPEALMRSRYAAYALADADYVRRTWHPDTVPAELDLNDGVKYTGLRIHRAEGDEVEFTASMKGPDGQPHNMRERSRFVQLDGRWVYLDAAE</sequence>
<name>Y483_DEIRA</name>